<gene>
    <name evidence="1" type="primary">cbiD</name>
    <name type="ordered locus">NATL1_00341</name>
</gene>
<keyword id="KW-0169">Cobalamin biosynthesis</keyword>
<keyword id="KW-0489">Methyltransferase</keyword>
<keyword id="KW-0949">S-adenosyl-L-methionine</keyword>
<keyword id="KW-0808">Transferase</keyword>
<sequence length="381" mass="41729">MNQFTLPVWVVAAAKSATNILIGNKFRDKERIDLPNKEESISVPISSSALLDNGKRSLAVSHCQSGLPLDITRGVEIWAYIQLSKGSSQSKGKVQNGFPDWLDFHAGCGVGKFQSSGQPCISQFARDLLCINLYPLVPKGNSIKVEIILPEGKDRASKTSNEAFGVVDGLSLIGTQAEVQISASPDQLKNCKEILYHKCSEAKFDGCLTFVIGENGMDLAMKYGLPANQIIKTGNWLGPLLVAAAENGVKKLLLFGYHGKLIKLSGGVFHTHHHLADGRIEILTSLAFREGISFDLIELISKSTSVENALLTLEVSNPDAVSLIWSRMAKEIEIKSRSYVNRYLSSSMEIGSVLFDRKRQMRWAGLEGLKQINSLGLILKR</sequence>
<organism>
    <name type="scientific">Prochlorococcus marinus (strain NATL1A)</name>
    <dbReference type="NCBI Taxonomy" id="167555"/>
    <lineage>
        <taxon>Bacteria</taxon>
        <taxon>Bacillati</taxon>
        <taxon>Cyanobacteriota</taxon>
        <taxon>Cyanophyceae</taxon>
        <taxon>Synechococcales</taxon>
        <taxon>Prochlorococcaceae</taxon>
        <taxon>Prochlorococcus</taxon>
    </lineage>
</organism>
<evidence type="ECO:0000255" key="1">
    <source>
        <dbReference type="HAMAP-Rule" id="MF_00787"/>
    </source>
</evidence>
<feature type="chain" id="PRO_1000046871" description="Cobalt-precorrin-5B C(1)-methyltransferase">
    <location>
        <begin position="1"/>
        <end position="381"/>
    </location>
</feature>
<reference key="1">
    <citation type="journal article" date="2007" name="PLoS Genet.">
        <title>Patterns and implications of gene gain and loss in the evolution of Prochlorococcus.</title>
        <authorList>
            <person name="Kettler G.C."/>
            <person name="Martiny A.C."/>
            <person name="Huang K."/>
            <person name="Zucker J."/>
            <person name="Coleman M.L."/>
            <person name="Rodrigue S."/>
            <person name="Chen F."/>
            <person name="Lapidus A."/>
            <person name="Ferriera S."/>
            <person name="Johnson J."/>
            <person name="Steglich C."/>
            <person name="Church G.M."/>
            <person name="Richardson P."/>
            <person name="Chisholm S.W."/>
        </authorList>
    </citation>
    <scope>NUCLEOTIDE SEQUENCE [LARGE SCALE GENOMIC DNA]</scope>
    <source>
        <strain>NATL1A</strain>
    </source>
</reference>
<dbReference type="EC" id="2.1.1.195" evidence="1"/>
<dbReference type="EMBL" id="CP000553">
    <property type="protein sequence ID" value="ABM74598.1"/>
    <property type="molecule type" value="Genomic_DNA"/>
</dbReference>
<dbReference type="RefSeq" id="WP_011822836.1">
    <property type="nucleotide sequence ID" value="NC_008819.1"/>
</dbReference>
<dbReference type="SMR" id="A2BZD8"/>
<dbReference type="KEGG" id="pme:NATL1_00341"/>
<dbReference type="eggNOG" id="COG1903">
    <property type="taxonomic scope" value="Bacteria"/>
</dbReference>
<dbReference type="HOGENOM" id="CLU_041273_1_2_3"/>
<dbReference type="UniPathway" id="UPA00148">
    <property type="reaction ID" value="UER00227"/>
</dbReference>
<dbReference type="Proteomes" id="UP000002592">
    <property type="component" value="Chromosome"/>
</dbReference>
<dbReference type="GO" id="GO:0043780">
    <property type="term" value="F:cobalt-precorrin-5B C1-methyltransferase activity"/>
    <property type="evidence" value="ECO:0007669"/>
    <property type="project" value="RHEA"/>
</dbReference>
<dbReference type="GO" id="GO:0019251">
    <property type="term" value="P:anaerobic cobalamin biosynthetic process"/>
    <property type="evidence" value="ECO:0007669"/>
    <property type="project" value="UniProtKB-UniRule"/>
</dbReference>
<dbReference type="GO" id="GO:0032259">
    <property type="term" value="P:methylation"/>
    <property type="evidence" value="ECO:0007669"/>
    <property type="project" value="UniProtKB-KW"/>
</dbReference>
<dbReference type="Gene3D" id="3.30.2110.10">
    <property type="entry name" value="CbiD-like"/>
    <property type="match status" value="1"/>
</dbReference>
<dbReference type="HAMAP" id="MF_00787">
    <property type="entry name" value="CbiD"/>
    <property type="match status" value="1"/>
</dbReference>
<dbReference type="InterPro" id="IPR002748">
    <property type="entry name" value="CbiD"/>
</dbReference>
<dbReference type="InterPro" id="IPR036074">
    <property type="entry name" value="CbiD_sf"/>
</dbReference>
<dbReference type="NCBIfam" id="TIGR00312">
    <property type="entry name" value="cbiD"/>
    <property type="match status" value="1"/>
</dbReference>
<dbReference type="PANTHER" id="PTHR35863">
    <property type="entry name" value="COBALT-PRECORRIN-5B C(1)-METHYLTRANSFERASE"/>
    <property type="match status" value="1"/>
</dbReference>
<dbReference type="PANTHER" id="PTHR35863:SF1">
    <property type="entry name" value="COBALT-PRECORRIN-5B C(1)-METHYLTRANSFERASE"/>
    <property type="match status" value="1"/>
</dbReference>
<dbReference type="Pfam" id="PF01888">
    <property type="entry name" value="CbiD"/>
    <property type="match status" value="1"/>
</dbReference>
<dbReference type="PIRSF" id="PIRSF026782">
    <property type="entry name" value="CbiD"/>
    <property type="match status" value="1"/>
</dbReference>
<dbReference type="SUPFAM" id="SSF111342">
    <property type="entry name" value="CbiD-like"/>
    <property type="match status" value="1"/>
</dbReference>
<proteinExistence type="inferred from homology"/>
<protein>
    <recommendedName>
        <fullName evidence="1">Cobalt-precorrin-5B C(1)-methyltransferase</fullName>
        <ecNumber evidence="1">2.1.1.195</ecNumber>
    </recommendedName>
    <alternativeName>
        <fullName evidence="1">Cobalt-precorrin-6A synthase</fullName>
    </alternativeName>
</protein>
<comment type="function">
    <text evidence="1">Catalyzes the methylation of C-1 in cobalt-precorrin-5B to form cobalt-precorrin-6A.</text>
</comment>
<comment type="catalytic activity">
    <reaction evidence="1">
        <text>Co-precorrin-5B + S-adenosyl-L-methionine = Co-precorrin-6A + S-adenosyl-L-homocysteine</text>
        <dbReference type="Rhea" id="RHEA:26285"/>
        <dbReference type="ChEBI" id="CHEBI:57856"/>
        <dbReference type="ChEBI" id="CHEBI:59789"/>
        <dbReference type="ChEBI" id="CHEBI:60063"/>
        <dbReference type="ChEBI" id="CHEBI:60064"/>
        <dbReference type="EC" id="2.1.1.195"/>
    </reaction>
</comment>
<comment type="pathway">
    <text evidence="1">Cofactor biosynthesis; adenosylcobalamin biosynthesis; cob(II)yrinate a,c-diamide from sirohydrochlorin (anaerobic route): step 6/10.</text>
</comment>
<comment type="similarity">
    <text evidence="1">Belongs to the CbiD family.</text>
</comment>
<name>CBID_PROM1</name>
<accession>A2BZD8</accession>